<feature type="chain" id="PRO_0000057404" description="tRNA pseudouridine synthase A">
    <location>
        <begin position="1"/>
        <end position="248"/>
    </location>
</feature>
<feature type="active site" description="Nucleophile" evidence="1">
    <location>
        <position position="53"/>
    </location>
</feature>
<feature type="binding site" evidence="1">
    <location>
        <position position="111"/>
    </location>
    <ligand>
        <name>substrate</name>
    </ligand>
</feature>
<reference key="1">
    <citation type="journal article" date="2001" name="Science">
        <title>Comparative genomics of Listeria species.</title>
        <authorList>
            <person name="Glaser P."/>
            <person name="Frangeul L."/>
            <person name="Buchrieser C."/>
            <person name="Rusniok C."/>
            <person name="Amend A."/>
            <person name="Baquero F."/>
            <person name="Berche P."/>
            <person name="Bloecker H."/>
            <person name="Brandt P."/>
            <person name="Chakraborty T."/>
            <person name="Charbit A."/>
            <person name="Chetouani F."/>
            <person name="Couve E."/>
            <person name="de Daruvar A."/>
            <person name="Dehoux P."/>
            <person name="Domann E."/>
            <person name="Dominguez-Bernal G."/>
            <person name="Duchaud E."/>
            <person name="Durant L."/>
            <person name="Dussurget O."/>
            <person name="Entian K.-D."/>
            <person name="Fsihi H."/>
            <person name="Garcia-del Portillo F."/>
            <person name="Garrido P."/>
            <person name="Gautier L."/>
            <person name="Goebel W."/>
            <person name="Gomez-Lopez N."/>
            <person name="Hain T."/>
            <person name="Hauf J."/>
            <person name="Jackson D."/>
            <person name="Jones L.-M."/>
            <person name="Kaerst U."/>
            <person name="Kreft J."/>
            <person name="Kuhn M."/>
            <person name="Kunst F."/>
            <person name="Kurapkat G."/>
            <person name="Madueno E."/>
            <person name="Maitournam A."/>
            <person name="Mata Vicente J."/>
            <person name="Ng E."/>
            <person name="Nedjari H."/>
            <person name="Nordsiek G."/>
            <person name="Novella S."/>
            <person name="de Pablos B."/>
            <person name="Perez-Diaz J.-C."/>
            <person name="Purcell R."/>
            <person name="Remmel B."/>
            <person name="Rose M."/>
            <person name="Schlueter T."/>
            <person name="Simoes N."/>
            <person name="Tierrez A."/>
            <person name="Vazquez-Boland J.-A."/>
            <person name="Voss H."/>
            <person name="Wehland J."/>
            <person name="Cossart P."/>
        </authorList>
    </citation>
    <scope>NUCLEOTIDE SEQUENCE [LARGE SCALE GENOMIC DNA]</scope>
    <source>
        <strain>ATCC BAA-679 / EGD-e</strain>
    </source>
</reference>
<gene>
    <name evidence="1" type="primary">truA</name>
    <name type="ordered locus">lmo2598</name>
</gene>
<sequence length="248" mass="28399">MTRYKAIISYDGSGFYGYQVQPNTRTVQAEIEKALTKMHKGKTVRVTASGRTDTGVHAKGQVIHFDSELDITAEKFQKALQVMTPFDISFLTVEEVPDDFHARFGTVGKEYRYVVKRTKIFDPFSRNFALHYPYELDISKMKLASKRLIGEHDFTSFCSARTERDSKVRTLYSIDFYEEDDETLVIAFQGNGFLYNMVRILTGTLLDAGQGRISPDDISEALLARDRQKLISKTAPPQGLYLWRVDYE</sequence>
<protein>
    <recommendedName>
        <fullName evidence="1">tRNA pseudouridine synthase A</fullName>
        <ecNumber evidence="1">5.4.99.12</ecNumber>
    </recommendedName>
    <alternativeName>
        <fullName evidence="1">tRNA pseudouridine(38-40) synthase</fullName>
    </alternativeName>
    <alternativeName>
        <fullName evidence="1">tRNA pseudouridylate synthase I</fullName>
    </alternativeName>
    <alternativeName>
        <fullName evidence="1">tRNA-uridine isomerase I</fullName>
    </alternativeName>
</protein>
<dbReference type="EC" id="5.4.99.12" evidence="1"/>
<dbReference type="EMBL" id="AL591983">
    <property type="protein sequence ID" value="CAD00676.1"/>
    <property type="molecule type" value="Genomic_DNA"/>
</dbReference>
<dbReference type="PIR" id="AF1399">
    <property type="entry name" value="AF1399"/>
</dbReference>
<dbReference type="RefSeq" id="NP_466121.1">
    <property type="nucleotide sequence ID" value="NC_003210.1"/>
</dbReference>
<dbReference type="RefSeq" id="WP_003733032.1">
    <property type="nucleotide sequence ID" value="NZ_CP149495.1"/>
</dbReference>
<dbReference type="SMR" id="Q8Y457"/>
<dbReference type="STRING" id="169963.gene:17595316"/>
<dbReference type="PaxDb" id="169963-lmo2598"/>
<dbReference type="EnsemblBacteria" id="CAD00676">
    <property type="protein sequence ID" value="CAD00676"/>
    <property type="gene ID" value="CAD00676"/>
</dbReference>
<dbReference type="GeneID" id="986311"/>
<dbReference type="KEGG" id="lmo:lmo2598"/>
<dbReference type="PATRIC" id="fig|169963.11.peg.2662"/>
<dbReference type="eggNOG" id="COG0101">
    <property type="taxonomic scope" value="Bacteria"/>
</dbReference>
<dbReference type="HOGENOM" id="CLU_014673_0_1_9"/>
<dbReference type="OrthoDB" id="9811823at2"/>
<dbReference type="PhylomeDB" id="Q8Y457"/>
<dbReference type="BioCyc" id="LMON169963:LMO2598-MONOMER"/>
<dbReference type="Proteomes" id="UP000000817">
    <property type="component" value="Chromosome"/>
</dbReference>
<dbReference type="GO" id="GO:0009982">
    <property type="term" value="F:pseudouridine synthase activity"/>
    <property type="evidence" value="ECO:0000318"/>
    <property type="project" value="GO_Central"/>
</dbReference>
<dbReference type="GO" id="GO:0003723">
    <property type="term" value="F:RNA binding"/>
    <property type="evidence" value="ECO:0007669"/>
    <property type="project" value="InterPro"/>
</dbReference>
<dbReference type="GO" id="GO:0160147">
    <property type="term" value="F:tRNA pseudouridine(38-40) synthase activity"/>
    <property type="evidence" value="ECO:0007669"/>
    <property type="project" value="UniProtKB-EC"/>
</dbReference>
<dbReference type="GO" id="GO:0031119">
    <property type="term" value="P:tRNA pseudouridine synthesis"/>
    <property type="evidence" value="ECO:0000318"/>
    <property type="project" value="GO_Central"/>
</dbReference>
<dbReference type="CDD" id="cd02570">
    <property type="entry name" value="PseudoU_synth_EcTruA"/>
    <property type="match status" value="1"/>
</dbReference>
<dbReference type="FunFam" id="3.30.70.580:FF:000001">
    <property type="entry name" value="tRNA pseudouridine synthase A"/>
    <property type="match status" value="1"/>
</dbReference>
<dbReference type="FunFam" id="3.30.70.660:FF:000004">
    <property type="entry name" value="tRNA pseudouridine synthase A"/>
    <property type="match status" value="1"/>
</dbReference>
<dbReference type="Gene3D" id="3.30.70.660">
    <property type="entry name" value="Pseudouridine synthase I, catalytic domain, C-terminal subdomain"/>
    <property type="match status" value="1"/>
</dbReference>
<dbReference type="Gene3D" id="3.30.70.580">
    <property type="entry name" value="Pseudouridine synthase I, catalytic domain, N-terminal subdomain"/>
    <property type="match status" value="1"/>
</dbReference>
<dbReference type="HAMAP" id="MF_00171">
    <property type="entry name" value="TruA"/>
    <property type="match status" value="1"/>
</dbReference>
<dbReference type="InterPro" id="IPR020103">
    <property type="entry name" value="PsdUridine_synth_cat_dom_sf"/>
</dbReference>
<dbReference type="InterPro" id="IPR001406">
    <property type="entry name" value="PsdUridine_synth_TruA"/>
</dbReference>
<dbReference type="InterPro" id="IPR020097">
    <property type="entry name" value="PsdUridine_synth_TruA_a/b_dom"/>
</dbReference>
<dbReference type="InterPro" id="IPR020095">
    <property type="entry name" value="PsdUridine_synth_TruA_C"/>
</dbReference>
<dbReference type="InterPro" id="IPR020094">
    <property type="entry name" value="TruA/RsuA/RluB/E/F_N"/>
</dbReference>
<dbReference type="NCBIfam" id="TIGR00071">
    <property type="entry name" value="hisT_truA"/>
    <property type="match status" value="1"/>
</dbReference>
<dbReference type="PANTHER" id="PTHR11142">
    <property type="entry name" value="PSEUDOURIDYLATE SYNTHASE"/>
    <property type="match status" value="1"/>
</dbReference>
<dbReference type="PANTHER" id="PTHR11142:SF0">
    <property type="entry name" value="TRNA PSEUDOURIDINE SYNTHASE-LIKE 1"/>
    <property type="match status" value="1"/>
</dbReference>
<dbReference type="Pfam" id="PF01416">
    <property type="entry name" value="PseudoU_synth_1"/>
    <property type="match status" value="2"/>
</dbReference>
<dbReference type="PIRSF" id="PIRSF001430">
    <property type="entry name" value="tRNA_psdUrid_synth"/>
    <property type="match status" value="1"/>
</dbReference>
<dbReference type="SUPFAM" id="SSF55120">
    <property type="entry name" value="Pseudouridine synthase"/>
    <property type="match status" value="1"/>
</dbReference>
<accession>Q8Y457</accession>
<name>TRUA_LISMO</name>
<keyword id="KW-0413">Isomerase</keyword>
<keyword id="KW-1185">Reference proteome</keyword>
<keyword id="KW-0819">tRNA processing</keyword>
<organism>
    <name type="scientific">Listeria monocytogenes serovar 1/2a (strain ATCC BAA-679 / EGD-e)</name>
    <dbReference type="NCBI Taxonomy" id="169963"/>
    <lineage>
        <taxon>Bacteria</taxon>
        <taxon>Bacillati</taxon>
        <taxon>Bacillota</taxon>
        <taxon>Bacilli</taxon>
        <taxon>Bacillales</taxon>
        <taxon>Listeriaceae</taxon>
        <taxon>Listeria</taxon>
    </lineage>
</organism>
<evidence type="ECO:0000255" key="1">
    <source>
        <dbReference type="HAMAP-Rule" id="MF_00171"/>
    </source>
</evidence>
<comment type="function">
    <text evidence="1">Formation of pseudouridine at positions 38, 39 and 40 in the anticodon stem and loop of transfer RNAs.</text>
</comment>
<comment type="catalytic activity">
    <reaction evidence="1">
        <text>uridine(38/39/40) in tRNA = pseudouridine(38/39/40) in tRNA</text>
        <dbReference type="Rhea" id="RHEA:22376"/>
        <dbReference type="Rhea" id="RHEA-COMP:10085"/>
        <dbReference type="Rhea" id="RHEA-COMP:10087"/>
        <dbReference type="ChEBI" id="CHEBI:65314"/>
        <dbReference type="ChEBI" id="CHEBI:65315"/>
        <dbReference type="EC" id="5.4.99.12"/>
    </reaction>
</comment>
<comment type="subunit">
    <text evidence="1">Homodimer.</text>
</comment>
<comment type="similarity">
    <text evidence="1">Belongs to the tRNA pseudouridine synthase TruA family.</text>
</comment>
<proteinExistence type="inferred from homology"/>